<gene>
    <name evidence="1" type="primary">trpD</name>
    <name type="ordered locus">BCAN_A1159</name>
</gene>
<protein>
    <recommendedName>
        <fullName evidence="1">Anthranilate phosphoribosyltransferase</fullName>
        <ecNumber evidence="1">2.4.2.18</ecNumber>
    </recommendedName>
</protein>
<evidence type="ECO:0000255" key="1">
    <source>
        <dbReference type="HAMAP-Rule" id="MF_00211"/>
    </source>
</evidence>
<proteinExistence type="inferred from homology"/>
<sequence>MADLKPYIAKAASGEPLSLGDAKAAFDIMMSGQATPSQIGGFLMALRVRGETVPEIAGAVASMRSRMIPVIAPDDAMDIVGTGGDQSGSYNVSSCTAFVVAGAGVPVAKHGNRALSSRSGAADALAALGINIEADADTIGRSISEAGLGFMFAPMHHSAMRHVGPSRVELGTRTIFNLLGPLSNPASVKRQLVGVFAPQWLEPLAHVLKELGSETAWVVYGDGLDEMTTAGTTQVAALENGQIRTFEITPEEVGLRRCSPAELKGGEAAENAKALLGVLEGKDSAYRDIVLLNSGAALVVAGKAENLKDGIAQAVQSIDSGAALAVLQKVIAVSNDKPA</sequence>
<name>TRPD_BRUC2</name>
<organism>
    <name type="scientific">Brucella canis (strain ATCC 23365 / NCTC 10854 / RM-666)</name>
    <dbReference type="NCBI Taxonomy" id="483179"/>
    <lineage>
        <taxon>Bacteria</taxon>
        <taxon>Pseudomonadati</taxon>
        <taxon>Pseudomonadota</taxon>
        <taxon>Alphaproteobacteria</taxon>
        <taxon>Hyphomicrobiales</taxon>
        <taxon>Brucellaceae</taxon>
        <taxon>Brucella/Ochrobactrum group</taxon>
        <taxon>Brucella</taxon>
    </lineage>
</organism>
<keyword id="KW-0028">Amino-acid biosynthesis</keyword>
<keyword id="KW-0057">Aromatic amino acid biosynthesis</keyword>
<keyword id="KW-0328">Glycosyltransferase</keyword>
<keyword id="KW-0460">Magnesium</keyword>
<keyword id="KW-0479">Metal-binding</keyword>
<keyword id="KW-1185">Reference proteome</keyword>
<keyword id="KW-0808">Transferase</keyword>
<keyword id="KW-0822">Tryptophan biosynthesis</keyword>
<feature type="chain" id="PRO_1000078005" description="Anthranilate phosphoribosyltransferase">
    <location>
        <begin position="1"/>
        <end position="339"/>
    </location>
</feature>
<feature type="binding site" evidence="1">
    <location>
        <position position="81"/>
    </location>
    <ligand>
        <name>5-phospho-alpha-D-ribose 1-diphosphate</name>
        <dbReference type="ChEBI" id="CHEBI:58017"/>
    </ligand>
</feature>
<feature type="binding site" evidence="1">
    <location>
        <position position="81"/>
    </location>
    <ligand>
        <name>anthranilate</name>
        <dbReference type="ChEBI" id="CHEBI:16567"/>
        <label>1</label>
    </ligand>
</feature>
<feature type="binding site" evidence="1">
    <location>
        <begin position="84"/>
        <end position="85"/>
    </location>
    <ligand>
        <name>5-phospho-alpha-D-ribose 1-diphosphate</name>
        <dbReference type="ChEBI" id="CHEBI:58017"/>
    </ligand>
</feature>
<feature type="binding site" evidence="1">
    <location>
        <position position="89"/>
    </location>
    <ligand>
        <name>5-phospho-alpha-D-ribose 1-diphosphate</name>
        <dbReference type="ChEBI" id="CHEBI:58017"/>
    </ligand>
</feature>
<feature type="binding site" evidence="1">
    <location>
        <begin position="91"/>
        <end position="94"/>
    </location>
    <ligand>
        <name>5-phospho-alpha-D-ribose 1-diphosphate</name>
        <dbReference type="ChEBI" id="CHEBI:58017"/>
    </ligand>
</feature>
<feature type="binding site" evidence="1">
    <location>
        <position position="93"/>
    </location>
    <ligand>
        <name>Mg(2+)</name>
        <dbReference type="ChEBI" id="CHEBI:18420"/>
        <label>1</label>
    </ligand>
</feature>
<feature type="binding site" evidence="1">
    <location>
        <begin position="109"/>
        <end position="117"/>
    </location>
    <ligand>
        <name>5-phospho-alpha-D-ribose 1-diphosphate</name>
        <dbReference type="ChEBI" id="CHEBI:58017"/>
    </ligand>
</feature>
<feature type="binding site" evidence="1">
    <location>
        <position position="112"/>
    </location>
    <ligand>
        <name>anthranilate</name>
        <dbReference type="ChEBI" id="CHEBI:16567"/>
        <label>1</label>
    </ligand>
</feature>
<feature type="binding site" evidence="1">
    <location>
        <position position="121"/>
    </location>
    <ligand>
        <name>5-phospho-alpha-D-ribose 1-diphosphate</name>
        <dbReference type="ChEBI" id="CHEBI:58017"/>
    </ligand>
</feature>
<feature type="binding site" evidence="1">
    <location>
        <position position="167"/>
    </location>
    <ligand>
        <name>anthranilate</name>
        <dbReference type="ChEBI" id="CHEBI:16567"/>
        <label>2</label>
    </ligand>
</feature>
<feature type="binding site" evidence="1">
    <location>
        <position position="225"/>
    </location>
    <ligand>
        <name>Mg(2+)</name>
        <dbReference type="ChEBI" id="CHEBI:18420"/>
        <label>2</label>
    </ligand>
</feature>
<feature type="binding site" evidence="1">
    <location>
        <position position="226"/>
    </location>
    <ligand>
        <name>Mg(2+)</name>
        <dbReference type="ChEBI" id="CHEBI:18420"/>
        <label>1</label>
    </ligand>
</feature>
<feature type="binding site" evidence="1">
    <location>
        <position position="226"/>
    </location>
    <ligand>
        <name>Mg(2+)</name>
        <dbReference type="ChEBI" id="CHEBI:18420"/>
        <label>2</label>
    </ligand>
</feature>
<reference key="1">
    <citation type="submission" date="2007-10" db="EMBL/GenBank/DDBJ databases">
        <title>Brucella canis ATCC 23365 whole genome shotgun sequencing project.</title>
        <authorList>
            <person name="Setubal J.C."/>
            <person name="Bowns C."/>
            <person name="Boyle S."/>
            <person name="Crasta O.R."/>
            <person name="Czar M.J."/>
            <person name="Dharmanolla C."/>
            <person name="Gillespie J.J."/>
            <person name="Kenyon R.W."/>
            <person name="Lu J."/>
            <person name="Mane S."/>
            <person name="Mohapatra S."/>
            <person name="Nagrani S."/>
            <person name="Purkayastha A."/>
            <person name="Rajasimha H.K."/>
            <person name="Shallom J.M."/>
            <person name="Shallom S."/>
            <person name="Shukla M."/>
            <person name="Snyder E.E."/>
            <person name="Sobral B.W."/>
            <person name="Wattam A.R."/>
            <person name="Will R."/>
            <person name="Williams K."/>
            <person name="Yoo H."/>
            <person name="Bruce D."/>
            <person name="Detter C."/>
            <person name="Munk C."/>
            <person name="Brettin T.S."/>
        </authorList>
    </citation>
    <scope>NUCLEOTIDE SEQUENCE [LARGE SCALE GENOMIC DNA]</scope>
    <source>
        <strain>ATCC 23365 / NCTC 10854 / RM-666</strain>
    </source>
</reference>
<comment type="function">
    <text evidence="1">Catalyzes the transfer of the phosphoribosyl group of 5-phosphorylribose-1-pyrophosphate (PRPP) to anthranilate to yield N-(5'-phosphoribosyl)-anthranilate (PRA).</text>
</comment>
<comment type="catalytic activity">
    <reaction evidence="1">
        <text>N-(5-phospho-beta-D-ribosyl)anthranilate + diphosphate = 5-phospho-alpha-D-ribose 1-diphosphate + anthranilate</text>
        <dbReference type="Rhea" id="RHEA:11768"/>
        <dbReference type="ChEBI" id="CHEBI:16567"/>
        <dbReference type="ChEBI" id="CHEBI:18277"/>
        <dbReference type="ChEBI" id="CHEBI:33019"/>
        <dbReference type="ChEBI" id="CHEBI:58017"/>
        <dbReference type="EC" id="2.4.2.18"/>
    </reaction>
</comment>
<comment type="cofactor">
    <cofactor evidence="1">
        <name>Mg(2+)</name>
        <dbReference type="ChEBI" id="CHEBI:18420"/>
    </cofactor>
    <text evidence="1">Binds 2 magnesium ions per monomer.</text>
</comment>
<comment type="pathway">
    <text evidence="1">Amino-acid biosynthesis; L-tryptophan biosynthesis; L-tryptophan from chorismate: step 2/5.</text>
</comment>
<comment type="subunit">
    <text evidence="1">Homodimer.</text>
</comment>
<comment type="similarity">
    <text evidence="1">Belongs to the anthranilate phosphoribosyltransferase family.</text>
</comment>
<dbReference type="EC" id="2.4.2.18" evidence="1"/>
<dbReference type="EMBL" id="CP000872">
    <property type="protein sequence ID" value="ABX62208.1"/>
    <property type="molecule type" value="Genomic_DNA"/>
</dbReference>
<dbReference type="RefSeq" id="WP_004691759.1">
    <property type="nucleotide sequence ID" value="NC_010103.1"/>
</dbReference>
<dbReference type="SMR" id="A9M5F3"/>
<dbReference type="GeneID" id="97533608"/>
<dbReference type="KEGG" id="bcs:BCAN_A1159"/>
<dbReference type="HOGENOM" id="CLU_034315_2_1_5"/>
<dbReference type="UniPathway" id="UPA00035">
    <property type="reaction ID" value="UER00041"/>
</dbReference>
<dbReference type="Proteomes" id="UP000001385">
    <property type="component" value="Chromosome I"/>
</dbReference>
<dbReference type="GO" id="GO:0005829">
    <property type="term" value="C:cytosol"/>
    <property type="evidence" value="ECO:0007669"/>
    <property type="project" value="TreeGrafter"/>
</dbReference>
<dbReference type="GO" id="GO:0004048">
    <property type="term" value="F:anthranilate phosphoribosyltransferase activity"/>
    <property type="evidence" value="ECO:0007669"/>
    <property type="project" value="UniProtKB-UniRule"/>
</dbReference>
<dbReference type="GO" id="GO:0000287">
    <property type="term" value="F:magnesium ion binding"/>
    <property type="evidence" value="ECO:0007669"/>
    <property type="project" value="UniProtKB-UniRule"/>
</dbReference>
<dbReference type="GO" id="GO:0000162">
    <property type="term" value="P:L-tryptophan biosynthetic process"/>
    <property type="evidence" value="ECO:0007669"/>
    <property type="project" value="UniProtKB-UniRule"/>
</dbReference>
<dbReference type="FunFam" id="3.40.1030.10:FF:000002">
    <property type="entry name" value="Anthranilate phosphoribosyltransferase"/>
    <property type="match status" value="1"/>
</dbReference>
<dbReference type="Gene3D" id="3.40.1030.10">
    <property type="entry name" value="Nucleoside phosphorylase/phosphoribosyltransferase catalytic domain"/>
    <property type="match status" value="1"/>
</dbReference>
<dbReference type="Gene3D" id="1.20.970.10">
    <property type="entry name" value="Transferase, Pyrimidine Nucleoside Phosphorylase, Chain C"/>
    <property type="match status" value="1"/>
</dbReference>
<dbReference type="HAMAP" id="MF_00211">
    <property type="entry name" value="TrpD"/>
    <property type="match status" value="1"/>
</dbReference>
<dbReference type="InterPro" id="IPR005940">
    <property type="entry name" value="Anthranilate_Pribosyl_Tfrase"/>
</dbReference>
<dbReference type="InterPro" id="IPR000312">
    <property type="entry name" value="Glycosyl_Trfase_fam3"/>
</dbReference>
<dbReference type="InterPro" id="IPR017459">
    <property type="entry name" value="Glycosyl_Trfase_fam3_N_dom"/>
</dbReference>
<dbReference type="InterPro" id="IPR036320">
    <property type="entry name" value="Glycosyl_Trfase_fam3_N_dom_sf"/>
</dbReference>
<dbReference type="InterPro" id="IPR035902">
    <property type="entry name" value="Nuc_phospho_transferase"/>
</dbReference>
<dbReference type="NCBIfam" id="TIGR01245">
    <property type="entry name" value="trpD"/>
    <property type="match status" value="1"/>
</dbReference>
<dbReference type="PANTHER" id="PTHR43285">
    <property type="entry name" value="ANTHRANILATE PHOSPHORIBOSYLTRANSFERASE"/>
    <property type="match status" value="1"/>
</dbReference>
<dbReference type="PANTHER" id="PTHR43285:SF2">
    <property type="entry name" value="ANTHRANILATE PHOSPHORIBOSYLTRANSFERASE"/>
    <property type="match status" value="1"/>
</dbReference>
<dbReference type="Pfam" id="PF02885">
    <property type="entry name" value="Glycos_trans_3N"/>
    <property type="match status" value="1"/>
</dbReference>
<dbReference type="Pfam" id="PF00591">
    <property type="entry name" value="Glycos_transf_3"/>
    <property type="match status" value="1"/>
</dbReference>
<dbReference type="SUPFAM" id="SSF52418">
    <property type="entry name" value="Nucleoside phosphorylase/phosphoribosyltransferase catalytic domain"/>
    <property type="match status" value="1"/>
</dbReference>
<dbReference type="SUPFAM" id="SSF47648">
    <property type="entry name" value="Nucleoside phosphorylase/phosphoribosyltransferase N-terminal domain"/>
    <property type="match status" value="1"/>
</dbReference>
<accession>A9M5F3</accession>